<organism>
    <name type="scientific">Shewanella oneidensis (strain ATCC 700550 / JCM 31522 / CIP 106686 / LMG 19005 / NCIMB 14063 / MR-1)</name>
    <dbReference type="NCBI Taxonomy" id="211586"/>
    <lineage>
        <taxon>Bacteria</taxon>
        <taxon>Pseudomonadati</taxon>
        <taxon>Pseudomonadota</taxon>
        <taxon>Gammaproteobacteria</taxon>
        <taxon>Alteromonadales</taxon>
        <taxon>Shewanellaceae</taxon>
        <taxon>Shewanella</taxon>
    </lineage>
</organism>
<feature type="chain" id="PRO_0000138335" description="UvrABC system protein C">
    <location>
        <begin position="1"/>
        <end position="609"/>
    </location>
</feature>
<feature type="domain" description="GIY-YIG" evidence="1">
    <location>
        <begin position="16"/>
        <end position="94"/>
    </location>
</feature>
<feature type="domain" description="UVR" evidence="1">
    <location>
        <begin position="203"/>
        <end position="238"/>
    </location>
</feature>
<name>UVRC_SHEON</name>
<proteinExistence type="inferred from homology"/>
<reference key="1">
    <citation type="journal article" date="2002" name="Nat. Biotechnol.">
        <title>Genome sequence of the dissimilatory metal ion-reducing bacterium Shewanella oneidensis.</title>
        <authorList>
            <person name="Heidelberg J.F."/>
            <person name="Paulsen I.T."/>
            <person name="Nelson K.E."/>
            <person name="Gaidos E.J."/>
            <person name="Nelson W.C."/>
            <person name="Read T.D."/>
            <person name="Eisen J.A."/>
            <person name="Seshadri R."/>
            <person name="Ward N.L."/>
            <person name="Methe B.A."/>
            <person name="Clayton R.A."/>
            <person name="Meyer T."/>
            <person name="Tsapin A."/>
            <person name="Scott J."/>
            <person name="Beanan M.J."/>
            <person name="Brinkac L.M."/>
            <person name="Daugherty S.C."/>
            <person name="DeBoy R.T."/>
            <person name="Dodson R.J."/>
            <person name="Durkin A.S."/>
            <person name="Haft D.H."/>
            <person name="Kolonay J.F."/>
            <person name="Madupu R."/>
            <person name="Peterson J.D."/>
            <person name="Umayam L.A."/>
            <person name="White O."/>
            <person name="Wolf A.M."/>
            <person name="Vamathevan J.J."/>
            <person name="Weidman J.F."/>
            <person name="Impraim M."/>
            <person name="Lee K."/>
            <person name="Berry K.J."/>
            <person name="Lee C."/>
            <person name="Mueller J."/>
            <person name="Khouri H.M."/>
            <person name="Gill J."/>
            <person name="Utterback T.R."/>
            <person name="McDonald L.A."/>
            <person name="Feldblyum T.V."/>
            <person name="Smith H.O."/>
            <person name="Venter J.C."/>
            <person name="Nealson K.H."/>
            <person name="Fraser C.M."/>
        </authorList>
    </citation>
    <scope>NUCLEOTIDE SEQUENCE [LARGE SCALE GENOMIC DNA]</scope>
    <source>
        <strain>ATCC 700550 / JCM 31522 / CIP 106686 / LMG 19005 / NCIMB 14063 / MR-1</strain>
    </source>
</reference>
<sequence>MSTGFNAQSFLRTVTSSAGVYRMYDVKGDVIYVGKAKDLKKRLSSYFRKNLGNVKTQALVSHIHHIDVTLTHSETDALLLENDYIKQYMPKYNVLLRDDKSYPYILLSQHEHPRLAYHRGPQREKGHYFGPYPNGGAVRESLHLMQKLFPIRQCDDLYYKSRTRPCLQYQLSRCSAPCVGKVSNAEYDEQVKLASLFLKGKDKQVISELVAKMEEAAEQQAYEQAARFRDQIMALRRVAEQQEVSGNTGDMDVIGVHYASGIACFHLLFIREGKIFGSRSYYPTVPAQTDIEEVLRSFLLQFYLNADIQRTIPKEVVISHHFEELHELEAAVSEALNKKFSIKTNVRADRASFLRLAITNATNAVMTRLSHKNTVEQRFVLLEEILELNAPIQRMECFDISHTMGESTVASCVVFNREGPHKAEYRRYNIEGITPGDDYAAMKQAISRRFDKIDASGKIPDILFIDGGLGQLRIAQQIVDEKFVNLDKAPQLIGVAKGESRKPGLETLIFGDTETSFSLEDDSPALHLIQHIRDESHRFAITGHRNRRQKTRNTSTLESIPGIGPKRRKALLQHLGGLQEVKGASVAELAKVPGISIEMAQTIHDALRG</sequence>
<comment type="function">
    <text evidence="1">The UvrABC repair system catalyzes the recognition and processing of DNA lesions. UvrC both incises the 5' and 3' sides of the lesion. The N-terminal half is responsible for the 3' incision and the C-terminal half is responsible for the 5' incision.</text>
</comment>
<comment type="subunit">
    <text evidence="1">Interacts with UvrB in an incision complex.</text>
</comment>
<comment type="subcellular location">
    <subcellularLocation>
        <location evidence="1">Cytoplasm</location>
    </subcellularLocation>
</comment>
<comment type="similarity">
    <text evidence="1">Belongs to the UvrC family.</text>
</comment>
<dbReference type="EMBL" id="AE014299">
    <property type="protein sequence ID" value="AAN54913.1"/>
    <property type="molecule type" value="Genomic_DNA"/>
</dbReference>
<dbReference type="RefSeq" id="NP_717469.1">
    <property type="nucleotide sequence ID" value="NC_004347.2"/>
</dbReference>
<dbReference type="RefSeq" id="WP_011071973.1">
    <property type="nucleotide sequence ID" value="NZ_CP053946.1"/>
</dbReference>
<dbReference type="SMR" id="Q8EFV4"/>
<dbReference type="STRING" id="211586.SO_1861"/>
<dbReference type="PaxDb" id="211586-SO_1861"/>
<dbReference type="KEGG" id="son:SO_1861"/>
<dbReference type="PATRIC" id="fig|211586.12.peg.1789"/>
<dbReference type="eggNOG" id="COG0322">
    <property type="taxonomic scope" value="Bacteria"/>
</dbReference>
<dbReference type="HOGENOM" id="CLU_014841_3_0_6"/>
<dbReference type="OrthoDB" id="9804933at2"/>
<dbReference type="PhylomeDB" id="Q8EFV4"/>
<dbReference type="BioCyc" id="SONE211586:G1GMP-1713-MONOMER"/>
<dbReference type="Proteomes" id="UP000008186">
    <property type="component" value="Chromosome"/>
</dbReference>
<dbReference type="GO" id="GO:0005737">
    <property type="term" value="C:cytoplasm"/>
    <property type="evidence" value="ECO:0007669"/>
    <property type="project" value="UniProtKB-SubCell"/>
</dbReference>
<dbReference type="GO" id="GO:0009380">
    <property type="term" value="C:excinuclease repair complex"/>
    <property type="evidence" value="ECO:0000318"/>
    <property type="project" value="GO_Central"/>
</dbReference>
<dbReference type="GO" id="GO:0003677">
    <property type="term" value="F:DNA binding"/>
    <property type="evidence" value="ECO:0007669"/>
    <property type="project" value="UniProtKB-UniRule"/>
</dbReference>
<dbReference type="GO" id="GO:0009381">
    <property type="term" value="F:excinuclease ABC activity"/>
    <property type="evidence" value="ECO:0007669"/>
    <property type="project" value="UniProtKB-UniRule"/>
</dbReference>
<dbReference type="GO" id="GO:0006974">
    <property type="term" value="P:DNA damage response"/>
    <property type="evidence" value="ECO:0000318"/>
    <property type="project" value="GO_Central"/>
</dbReference>
<dbReference type="GO" id="GO:0006289">
    <property type="term" value="P:nucleotide-excision repair"/>
    <property type="evidence" value="ECO:0007669"/>
    <property type="project" value="UniProtKB-UniRule"/>
</dbReference>
<dbReference type="GO" id="GO:0009432">
    <property type="term" value="P:SOS response"/>
    <property type="evidence" value="ECO:0007669"/>
    <property type="project" value="UniProtKB-UniRule"/>
</dbReference>
<dbReference type="CDD" id="cd10434">
    <property type="entry name" value="GIY-YIG_UvrC_Cho"/>
    <property type="match status" value="1"/>
</dbReference>
<dbReference type="FunFam" id="1.10.150.20:FF:000005">
    <property type="entry name" value="UvrABC system protein C"/>
    <property type="match status" value="1"/>
</dbReference>
<dbReference type="FunFam" id="3.30.420.340:FF:000001">
    <property type="entry name" value="UvrABC system protein C"/>
    <property type="match status" value="1"/>
</dbReference>
<dbReference type="FunFam" id="3.40.1440.10:FF:000001">
    <property type="entry name" value="UvrABC system protein C"/>
    <property type="match status" value="1"/>
</dbReference>
<dbReference type="Gene3D" id="1.10.150.20">
    <property type="entry name" value="5' to 3' exonuclease, C-terminal subdomain"/>
    <property type="match status" value="1"/>
</dbReference>
<dbReference type="Gene3D" id="3.40.1440.10">
    <property type="entry name" value="GIY-YIG endonuclease"/>
    <property type="match status" value="1"/>
</dbReference>
<dbReference type="Gene3D" id="4.10.860.10">
    <property type="entry name" value="UVR domain"/>
    <property type="match status" value="1"/>
</dbReference>
<dbReference type="Gene3D" id="3.30.420.340">
    <property type="entry name" value="UvrC, RNAse H endonuclease domain"/>
    <property type="match status" value="1"/>
</dbReference>
<dbReference type="HAMAP" id="MF_00203">
    <property type="entry name" value="UvrC"/>
    <property type="match status" value="1"/>
</dbReference>
<dbReference type="InterPro" id="IPR000305">
    <property type="entry name" value="GIY-YIG_endonuc"/>
</dbReference>
<dbReference type="InterPro" id="IPR035901">
    <property type="entry name" value="GIY-YIG_endonuc_sf"/>
</dbReference>
<dbReference type="InterPro" id="IPR047296">
    <property type="entry name" value="GIY-YIG_UvrC_Cho"/>
</dbReference>
<dbReference type="InterPro" id="IPR003583">
    <property type="entry name" value="Hlx-hairpin-Hlx_DNA-bd_motif"/>
</dbReference>
<dbReference type="InterPro" id="IPR010994">
    <property type="entry name" value="RuvA_2-like"/>
</dbReference>
<dbReference type="InterPro" id="IPR001943">
    <property type="entry name" value="UVR_dom"/>
</dbReference>
<dbReference type="InterPro" id="IPR036876">
    <property type="entry name" value="UVR_dom_sf"/>
</dbReference>
<dbReference type="InterPro" id="IPR050066">
    <property type="entry name" value="UvrABC_protein_C"/>
</dbReference>
<dbReference type="InterPro" id="IPR004791">
    <property type="entry name" value="UvrC"/>
</dbReference>
<dbReference type="InterPro" id="IPR001162">
    <property type="entry name" value="UvrC_RNase_H_dom"/>
</dbReference>
<dbReference type="InterPro" id="IPR038476">
    <property type="entry name" value="UvrC_RNase_H_dom_sf"/>
</dbReference>
<dbReference type="NCBIfam" id="NF001824">
    <property type="entry name" value="PRK00558.1-5"/>
    <property type="match status" value="1"/>
</dbReference>
<dbReference type="NCBIfam" id="TIGR00194">
    <property type="entry name" value="uvrC"/>
    <property type="match status" value="1"/>
</dbReference>
<dbReference type="PANTHER" id="PTHR30562:SF1">
    <property type="entry name" value="UVRABC SYSTEM PROTEIN C"/>
    <property type="match status" value="1"/>
</dbReference>
<dbReference type="PANTHER" id="PTHR30562">
    <property type="entry name" value="UVRC/OXIDOREDUCTASE"/>
    <property type="match status" value="1"/>
</dbReference>
<dbReference type="Pfam" id="PF01541">
    <property type="entry name" value="GIY-YIG"/>
    <property type="match status" value="1"/>
</dbReference>
<dbReference type="Pfam" id="PF14520">
    <property type="entry name" value="HHH_5"/>
    <property type="match status" value="1"/>
</dbReference>
<dbReference type="Pfam" id="PF02151">
    <property type="entry name" value="UVR"/>
    <property type="match status" value="1"/>
</dbReference>
<dbReference type="Pfam" id="PF22920">
    <property type="entry name" value="UvrC_RNaseH"/>
    <property type="match status" value="1"/>
</dbReference>
<dbReference type="Pfam" id="PF08459">
    <property type="entry name" value="UvrC_RNaseH_dom"/>
    <property type="match status" value="1"/>
</dbReference>
<dbReference type="SMART" id="SM00465">
    <property type="entry name" value="GIYc"/>
    <property type="match status" value="1"/>
</dbReference>
<dbReference type="SMART" id="SM00278">
    <property type="entry name" value="HhH1"/>
    <property type="match status" value="2"/>
</dbReference>
<dbReference type="SUPFAM" id="SSF46600">
    <property type="entry name" value="C-terminal UvrC-binding domain of UvrB"/>
    <property type="match status" value="1"/>
</dbReference>
<dbReference type="SUPFAM" id="SSF82771">
    <property type="entry name" value="GIY-YIG endonuclease"/>
    <property type="match status" value="1"/>
</dbReference>
<dbReference type="SUPFAM" id="SSF47781">
    <property type="entry name" value="RuvA domain 2-like"/>
    <property type="match status" value="1"/>
</dbReference>
<dbReference type="PROSITE" id="PS50164">
    <property type="entry name" value="GIY_YIG"/>
    <property type="match status" value="1"/>
</dbReference>
<dbReference type="PROSITE" id="PS50151">
    <property type="entry name" value="UVR"/>
    <property type="match status" value="1"/>
</dbReference>
<dbReference type="PROSITE" id="PS50165">
    <property type="entry name" value="UVRC"/>
    <property type="match status" value="1"/>
</dbReference>
<evidence type="ECO:0000255" key="1">
    <source>
        <dbReference type="HAMAP-Rule" id="MF_00203"/>
    </source>
</evidence>
<gene>
    <name evidence="1" type="primary">uvrC</name>
    <name type="ordered locus">SO_1861</name>
</gene>
<accession>Q8EFV4</accession>
<keyword id="KW-0963">Cytoplasm</keyword>
<keyword id="KW-0227">DNA damage</keyword>
<keyword id="KW-0228">DNA excision</keyword>
<keyword id="KW-0234">DNA repair</keyword>
<keyword id="KW-0267">Excision nuclease</keyword>
<keyword id="KW-1185">Reference proteome</keyword>
<keyword id="KW-0742">SOS response</keyword>
<protein>
    <recommendedName>
        <fullName evidence="1">UvrABC system protein C</fullName>
        <shortName evidence="1">Protein UvrC</shortName>
    </recommendedName>
    <alternativeName>
        <fullName evidence="1">Excinuclease ABC subunit C</fullName>
    </alternativeName>
</protein>